<proteinExistence type="evidence at transcript level"/>
<name>RN220_BOVIN</name>
<sequence>MDLHRAAFKMENSSYLPNPLASPALMVLASTAEASRDASIPCQQPRPFGVPVSVDKDVHIPFTNGSYTFASMYHRQGGVPGTFANRDFPPSLLHLHPQFAPPNLDCTPISMLNHSGVGAFRPFASTEDRESYQSAFTPAKRLKNCHDTESPHLRFSDADGKEYDFGTQLPSSSPGSLKVDDTGKKIFAVSGLISDREASSSPEDRNDRCKKKAAALFDSQAPICPICQVLLRPSELQEHMEQELEQLAQLPASKNSLLKDAMAPGTPKSLLLSASIKREGESPTASPHSSATDDLHHSDRYQTFLRVRANRQTRLNARIGKMKRRKQDEGQREGSCMAEDDAADIEHENSNRFEEYEWCGQKRIRATTLLEGGFRGSGFVMCSGKENPDSDADLDVDGDDTLEYGKPQYTEADVIPCTGEEPGEAKEREALRGAVLNGGPPSTRITPEFSKWASDEMPSTSNGESSKQEAMQKTCKNSDIEKITEDSAVTTFEALKARVRELERQLSRGDRYKCLICMDSYSMPLTSIQCWHVHCEECWLRTLGAKKLCPQCYTITAPGDLRRIYL</sequence>
<reference key="1">
    <citation type="submission" date="2006-09" db="EMBL/GenBank/DDBJ databases">
        <authorList>
            <consortium name="NIH - Mammalian Gene Collection (MGC) project"/>
        </authorList>
    </citation>
    <scope>NUCLEOTIDE SEQUENCE [LARGE SCALE MRNA]</scope>
    <source>
        <strain>Hereford</strain>
        <tissue>Fetal pons</tissue>
    </source>
</reference>
<reference key="2">
    <citation type="journal article" date="2005" name="BMC Genomics">
        <title>Characterization of 954 bovine full-CDS cDNA sequences.</title>
        <authorList>
            <person name="Harhay G.P."/>
            <person name="Sonstegard T.S."/>
            <person name="Keele J.W."/>
            <person name="Heaton M.P."/>
            <person name="Clawson M.L."/>
            <person name="Snelling W.M."/>
            <person name="Wiedmann R.T."/>
            <person name="Van Tassell C.P."/>
            <person name="Smith T.P.L."/>
        </authorList>
    </citation>
    <scope>NUCLEOTIDE SEQUENCE [LARGE SCALE MRNA] OF 262-566</scope>
</reference>
<comment type="function">
    <text evidence="2 3">E3 ubiquitin-protein ligase that promotes the ubiquitination and proteasomal degradation of SIN3B (By similarity). Independently of its E3 ligase activity, acts as a CTNNB1 stabilizer through USP7-mediated deubiquitination of CTNNB1 promoting Wnt signaling (By similarity).</text>
</comment>
<comment type="catalytic activity">
    <reaction>
        <text>S-ubiquitinyl-[E2 ubiquitin-conjugating enzyme]-L-cysteine + [acceptor protein]-L-lysine = [E2 ubiquitin-conjugating enzyme]-L-cysteine + N(6)-ubiquitinyl-[acceptor protein]-L-lysine.</text>
        <dbReference type="EC" id="2.3.2.27"/>
    </reaction>
</comment>
<comment type="pathway">
    <text>Protein modification; protein ubiquitination.</text>
</comment>
<comment type="subunit">
    <text evidence="2 3">Interacts with SIN3B (By similarity). Interacts with CTNNB1 (via Armadillo repeats 2-8) (By similarity). Interacts with USP7 (via MATH domain) (By similarity).</text>
</comment>
<comment type="subcellular location">
    <subcellularLocation>
        <location evidence="1">Cytoplasm</location>
    </subcellularLocation>
</comment>
<comment type="PTM">
    <text evidence="1">Auto-ubiquitinated; leads to proteasomal degradation.</text>
</comment>
<evidence type="ECO:0000250" key="1"/>
<evidence type="ECO:0000250" key="2">
    <source>
        <dbReference type="UniProtKB" id="Q5VTB9"/>
    </source>
</evidence>
<evidence type="ECO:0000250" key="3">
    <source>
        <dbReference type="UniProtKB" id="Q6PDX6"/>
    </source>
</evidence>
<evidence type="ECO:0000255" key="4"/>
<evidence type="ECO:0000255" key="5">
    <source>
        <dbReference type="PROSITE-ProRule" id="PRU00175"/>
    </source>
</evidence>
<evidence type="ECO:0000256" key="6">
    <source>
        <dbReference type="SAM" id="MobiDB-lite"/>
    </source>
</evidence>
<evidence type="ECO:0000305" key="7"/>
<protein>
    <recommendedName>
        <fullName>E3 ubiquitin-protein ligase RNF220</fullName>
        <ecNumber>2.3.2.27</ecNumber>
    </recommendedName>
    <alternativeName>
        <fullName>RING finger protein 220</fullName>
    </alternativeName>
    <alternativeName>
        <fullName evidence="7">RING-type E3 ubiquitin transferase RNF220</fullName>
    </alternativeName>
</protein>
<feature type="chain" id="PRO_0000277656" description="E3 ubiquitin-protein ligase RNF220">
    <location>
        <begin position="1"/>
        <end position="566"/>
    </location>
</feature>
<feature type="zinc finger region" description="RING-type" evidence="5">
    <location>
        <begin position="514"/>
        <end position="553"/>
    </location>
</feature>
<feature type="region of interest" description="Disordered" evidence="6">
    <location>
        <begin position="277"/>
        <end position="297"/>
    </location>
</feature>
<feature type="region of interest" description="Required for targeting to the cytoplasm" evidence="1">
    <location>
        <begin position="514"/>
        <end position="522"/>
    </location>
</feature>
<feature type="coiled-coil region" evidence="4">
    <location>
        <begin position="485"/>
        <end position="513"/>
    </location>
</feature>
<feature type="modified residue" description="Phosphoserine" evidence="2">
    <location>
        <position position="390"/>
    </location>
</feature>
<feature type="cross-link" description="Glycyl lysine isopeptide (Lys-Gly) (interchain with G-Cter in SUMO2)" evidence="2">
    <location>
        <position position="277"/>
    </location>
</feature>
<feature type="sequence conflict" description="In Ref. 2; ABG67101." evidence="7" ref="2">
    <original>Y</original>
    <variation>N</variation>
    <location>
        <position position="553"/>
    </location>
</feature>
<keyword id="KW-0175">Coiled coil</keyword>
<keyword id="KW-0963">Cytoplasm</keyword>
<keyword id="KW-1017">Isopeptide bond</keyword>
<keyword id="KW-0479">Metal-binding</keyword>
<keyword id="KW-0597">Phosphoprotein</keyword>
<keyword id="KW-1185">Reference proteome</keyword>
<keyword id="KW-0808">Transferase</keyword>
<keyword id="KW-0832">Ubl conjugation</keyword>
<keyword id="KW-0833">Ubl conjugation pathway</keyword>
<keyword id="KW-0862">Zinc</keyword>
<keyword id="KW-0863">Zinc-finger</keyword>
<dbReference type="EC" id="2.3.2.27"/>
<dbReference type="EMBL" id="BC123549">
    <property type="protein sequence ID" value="AAI23550.1"/>
    <property type="molecule type" value="mRNA"/>
</dbReference>
<dbReference type="EMBL" id="BT026262">
    <property type="protein sequence ID" value="ABG67101.1"/>
    <property type="molecule type" value="mRNA"/>
</dbReference>
<dbReference type="RefSeq" id="NP_001070409.1">
    <property type="nucleotide sequence ID" value="NM_001076941.2"/>
</dbReference>
<dbReference type="SMR" id="Q08DV5"/>
<dbReference type="FunCoup" id="Q08DV5">
    <property type="interactions" value="2109"/>
</dbReference>
<dbReference type="STRING" id="9913.ENSBTAP00000016395"/>
<dbReference type="PaxDb" id="9913-ENSBTAP00000016395"/>
<dbReference type="GeneID" id="616005"/>
<dbReference type="KEGG" id="bta:616005"/>
<dbReference type="CTD" id="55182"/>
<dbReference type="eggNOG" id="ENOG502QR1N">
    <property type="taxonomic scope" value="Eukaryota"/>
</dbReference>
<dbReference type="InParanoid" id="Q08DV5"/>
<dbReference type="OrthoDB" id="6270329at2759"/>
<dbReference type="UniPathway" id="UPA00143"/>
<dbReference type="Proteomes" id="UP000009136">
    <property type="component" value="Unplaced"/>
</dbReference>
<dbReference type="GO" id="GO:0005737">
    <property type="term" value="C:cytoplasm"/>
    <property type="evidence" value="ECO:0000250"/>
    <property type="project" value="UniProtKB"/>
</dbReference>
<dbReference type="GO" id="GO:0061630">
    <property type="term" value="F:ubiquitin protein ligase activity"/>
    <property type="evidence" value="ECO:0000318"/>
    <property type="project" value="GO_Central"/>
</dbReference>
<dbReference type="GO" id="GO:0004842">
    <property type="term" value="F:ubiquitin-protein transferase activity"/>
    <property type="evidence" value="ECO:0000250"/>
    <property type="project" value="UniProtKB"/>
</dbReference>
<dbReference type="GO" id="GO:0008270">
    <property type="term" value="F:zinc ion binding"/>
    <property type="evidence" value="ECO:0007669"/>
    <property type="project" value="UniProtKB-KW"/>
</dbReference>
<dbReference type="GO" id="GO:0090263">
    <property type="term" value="P:positive regulation of canonical Wnt signaling pathway"/>
    <property type="evidence" value="ECO:0000250"/>
    <property type="project" value="UniProtKB"/>
</dbReference>
<dbReference type="GO" id="GO:0051865">
    <property type="term" value="P:protein autoubiquitination"/>
    <property type="evidence" value="ECO:0000250"/>
    <property type="project" value="UniProtKB"/>
</dbReference>
<dbReference type="GO" id="GO:0016567">
    <property type="term" value="P:protein ubiquitination"/>
    <property type="evidence" value="ECO:0000250"/>
    <property type="project" value="UniProtKB"/>
</dbReference>
<dbReference type="CDD" id="cd16563">
    <property type="entry name" value="RING-HC_RNF220"/>
    <property type="match status" value="1"/>
</dbReference>
<dbReference type="FunFam" id="3.30.40.10:FF:000195">
    <property type="entry name" value="E3 ubiquitin-protein ligase RNF220"/>
    <property type="match status" value="1"/>
</dbReference>
<dbReference type="Gene3D" id="3.30.40.10">
    <property type="entry name" value="Zinc/RING finger domain, C3HC4 (zinc finger)"/>
    <property type="match status" value="1"/>
</dbReference>
<dbReference type="InterPro" id="IPR052443">
    <property type="entry name" value="E3_ubiq-ligase_RNF220-like"/>
</dbReference>
<dbReference type="InterPro" id="IPR031824">
    <property type="entry name" value="RNF220_mid"/>
</dbReference>
<dbReference type="InterPro" id="IPR040178">
    <property type="entry name" value="RNF220_RING"/>
</dbReference>
<dbReference type="InterPro" id="IPR001841">
    <property type="entry name" value="Znf_RING"/>
</dbReference>
<dbReference type="InterPro" id="IPR013083">
    <property type="entry name" value="Znf_RING/FYVE/PHD"/>
</dbReference>
<dbReference type="PANTHER" id="PTHR13459:SF3">
    <property type="entry name" value="E3 UBIQUITIN-PROTEIN LIGASE RNF220"/>
    <property type="match status" value="1"/>
</dbReference>
<dbReference type="PANTHER" id="PTHR13459">
    <property type="entry name" value="E3 UBIQUITIN-PROTEIN LIGASE RNF220 ISOFORM X1"/>
    <property type="match status" value="1"/>
</dbReference>
<dbReference type="Pfam" id="PF15926">
    <property type="entry name" value="RNF220"/>
    <property type="match status" value="1"/>
</dbReference>
<dbReference type="Pfam" id="PF13923">
    <property type="entry name" value="zf-C3HC4_2"/>
    <property type="match status" value="1"/>
</dbReference>
<dbReference type="SUPFAM" id="SSF57850">
    <property type="entry name" value="RING/U-box"/>
    <property type="match status" value="1"/>
</dbReference>
<dbReference type="PROSITE" id="PS50089">
    <property type="entry name" value="ZF_RING_2"/>
    <property type="match status" value="1"/>
</dbReference>
<gene>
    <name type="primary">RNF220</name>
</gene>
<accession>Q08DV5</accession>
<accession>Q0V8F6</accession>
<organism>
    <name type="scientific">Bos taurus</name>
    <name type="common">Bovine</name>
    <dbReference type="NCBI Taxonomy" id="9913"/>
    <lineage>
        <taxon>Eukaryota</taxon>
        <taxon>Metazoa</taxon>
        <taxon>Chordata</taxon>
        <taxon>Craniata</taxon>
        <taxon>Vertebrata</taxon>
        <taxon>Euteleostomi</taxon>
        <taxon>Mammalia</taxon>
        <taxon>Eutheria</taxon>
        <taxon>Laurasiatheria</taxon>
        <taxon>Artiodactyla</taxon>
        <taxon>Ruminantia</taxon>
        <taxon>Pecora</taxon>
        <taxon>Bovidae</taxon>
        <taxon>Bovinae</taxon>
        <taxon>Bos</taxon>
    </lineage>
</organism>